<proteinExistence type="inferred from homology"/>
<keyword id="KW-0963">Cytoplasm</keyword>
<keyword id="KW-0378">Hydrolase</keyword>
<keyword id="KW-0479">Metal-binding</keyword>
<keyword id="KW-0533">Nickel</keyword>
<evidence type="ECO:0000255" key="1">
    <source>
        <dbReference type="HAMAP-Rule" id="MF_01953"/>
    </source>
</evidence>
<feature type="chain" id="PRO_1000070680" description="Urease subunit alpha">
    <location>
        <begin position="1"/>
        <end position="569"/>
    </location>
</feature>
<feature type="domain" description="Urease" evidence="1">
    <location>
        <begin position="131"/>
        <end position="569"/>
    </location>
</feature>
<feature type="active site" description="Proton donor" evidence="1">
    <location>
        <position position="322"/>
    </location>
</feature>
<feature type="binding site" evidence="1">
    <location>
        <position position="136"/>
    </location>
    <ligand>
        <name>Ni(2+)</name>
        <dbReference type="ChEBI" id="CHEBI:49786"/>
        <label>1</label>
    </ligand>
</feature>
<feature type="binding site" evidence="1">
    <location>
        <position position="138"/>
    </location>
    <ligand>
        <name>Ni(2+)</name>
        <dbReference type="ChEBI" id="CHEBI:49786"/>
        <label>1</label>
    </ligand>
</feature>
<feature type="binding site" description="via carbamate group" evidence="1">
    <location>
        <position position="219"/>
    </location>
    <ligand>
        <name>Ni(2+)</name>
        <dbReference type="ChEBI" id="CHEBI:49786"/>
        <label>1</label>
    </ligand>
</feature>
<feature type="binding site" description="via carbamate group" evidence="1">
    <location>
        <position position="219"/>
    </location>
    <ligand>
        <name>Ni(2+)</name>
        <dbReference type="ChEBI" id="CHEBI:49786"/>
        <label>2</label>
    </ligand>
</feature>
<feature type="binding site" evidence="1">
    <location>
        <position position="221"/>
    </location>
    <ligand>
        <name>substrate</name>
    </ligand>
</feature>
<feature type="binding site" evidence="1">
    <location>
        <position position="248"/>
    </location>
    <ligand>
        <name>Ni(2+)</name>
        <dbReference type="ChEBI" id="CHEBI:49786"/>
        <label>2</label>
    </ligand>
</feature>
<feature type="binding site" evidence="1">
    <location>
        <position position="274"/>
    </location>
    <ligand>
        <name>Ni(2+)</name>
        <dbReference type="ChEBI" id="CHEBI:49786"/>
        <label>2</label>
    </ligand>
</feature>
<feature type="binding site" evidence="1">
    <location>
        <position position="362"/>
    </location>
    <ligand>
        <name>Ni(2+)</name>
        <dbReference type="ChEBI" id="CHEBI:49786"/>
        <label>1</label>
    </ligand>
</feature>
<feature type="modified residue" description="N6-carboxylysine" evidence="1">
    <location>
        <position position="219"/>
    </location>
</feature>
<reference key="1">
    <citation type="journal article" date="2007" name="PLoS Genet.">
        <title>Patterns and implications of gene gain and loss in the evolution of Prochlorococcus.</title>
        <authorList>
            <person name="Kettler G.C."/>
            <person name="Martiny A.C."/>
            <person name="Huang K."/>
            <person name="Zucker J."/>
            <person name="Coleman M.L."/>
            <person name="Rodrigue S."/>
            <person name="Chen F."/>
            <person name="Lapidus A."/>
            <person name="Ferriera S."/>
            <person name="Johnson J."/>
            <person name="Steglich C."/>
            <person name="Church G.M."/>
            <person name="Richardson P."/>
            <person name="Chisholm S.W."/>
        </authorList>
    </citation>
    <scope>NUCLEOTIDE SEQUENCE [LARGE SCALE GENOMIC DNA]</scope>
    <source>
        <strain>NATL1A</strain>
    </source>
</reference>
<name>URE1_PROM1</name>
<accession>A2C4S2</accession>
<organism>
    <name type="scientific">Prochlorococcus marinus (strain NATL1A)</name>
    <dbReference type="NCBI Taxonomy" id="167555"/>
    <lineage>
        <taxon>Bacteria</taxon>
        <taxon>Bacillati</taxon>
        <taxon>Cyanobacteriota</taxon>
        <taxon>Cyanophyceae</taxon>
        <taxon>Synechococcales</taxon>
        <taxon>Prochlorococcaceae</taxon>
        <taxon>Prochlorococcus</taxon>
    </lineage>
</organism>
<sequence length="569" mass="60976">MPFKISRQAYAETYGPTKGDRIRLADTDLILEVEQDHTHYGDEVKFGGGKVIRDGMGQSQQSRDNGVVDTVITNALILDWWGIVKADIGIKDGKISGIGKAGNPDTQEGVNIIVGASTEAIAGEGSIITAGAIDSHIHFICPQQIETALASGVTTMLGGGTGPATGTNATTCTPGAFHISRMLQSAEGFPVNLGFFGKGNATNKAALEEQVRAGACGLKLHEDWGTTPACIDSCLSVADQLDVQVCIHTDTLNEAGFVEDTIKAIKGRTIHTFHTEGAGGGHAPDIIKICGESNVIPSSTNPTRPFTLNTLEEHLDMLMVCHHLDPKIPEDVAFAESRIRRETIAAEDILHDLGAFSIIASDSQAMGRVGEVISRTFQTAHKMKVQRGALPEDNQRNDNHRLKRYISKVTINPAIAHGISAHVGSVEVGKLADLVLWKPGFFGIKPDLVVKGGCIAWAQMGDANASIPTPQPVHGRPMFSSFGKAISPTCLTFLSENAIDAGVPERLKLERTCAPVKDTRKISKQSMKLNDARPKIEVDPQTYEVFANGELLTCEPAESLPLAQRYLLL</sequence>
<protein>
    <recommendedName>
        <fullName evidence="1">Urease subunit alpha</fullName>
        <ecNumber evidence="1">3.5.1.5</ecNumber>
    </recommendedName>
    <alternativeName>
        <fullName evidence="1">Urea amidohydrolase subunit alpha</fullName>
    </alternativeName>
</protein>
<gene>
    <name evidence="1" type="primary">ureC</name>
    <name type="ordered locus">NATL1_19261</name>
</gene>
<comment type="catalytic activity">
    <reaction evidence="1">
        <text>urea + 2 H2O + H(+) = hydrogencarbonate + 2 NH4(+)</text>
        <dbReference type="Rhea" id="RHEA:20557"/>
        <dbReference type="ChEBI" id="CHEBI:15377"/>
        <dbReference type="ChEBI" id="CHEBI:15378"/>
        <dbReference type="ChEBI" id="CHEBI:16199"/>
        <dbReference type="ChEBI" id="CHEBI:17544"/>
        <dbReference type="ChEBI" id="CHEBI:28938"/>
        <dbReference type="EC" id="3.5.1.5"/>
    </reaction>
</comment>
<comment type="cofactor">
    <cofactor evidence="1">
        <name>Ni cation</name>
        <dbReference type="ChEBI" id="CHEBI:25516"/>
    </cofactor>
    <text evidence="1">Binds 2 nickel ions per subunit.</text>
</comment>
<comment type="pathway">
    <text evidence="1">Nitrogen metabolism; urea degradation; CO(2) and NH(3) from urea (urease route): step 1/1.</text>
</comment>
<comment type="subunit">
    <text evidence="1">Heterotrimer of UreA (gamma), UreB (beta) and UreC (alpha) subunits. Three heterotrimers associate to form the active enzyme.</text>
</comment>
<comment type="subcellular location">
    <subcellularLocation>
        <location evidence="1">Cytoplasm</location>
    </subcellularLocation>
</comment>
<comment type="PTM">
    <text evidence="1">Carboxylation allows a single lysine to coordinate two nickel ions.</text>
</comment>
<comment type="similarity">
    <text evidence="1">Belongs to the metallo-dependent hydrolases superfamily. Urease alpha subunit family.</text>
</comment>
<dbReference type="EC" id="3.5.1.5" evidence="1"/>
<dbReference type="EMBL" id="CP000553">
    <property type="protein sequence ID" value="ABM76482.1"/>
    <property type="molecule type" value="Genomic_DNA"/>
</dbReference>
<dbReference type="RefSeq" id="WP_011824457.1">
    <property type="nucleotide sequence ID" value="NC_008819.1"/>
</dbReference>
<dbReference type="SMR" id="A2C4S2"/>
<dbReference type="KEGG" id="pme:NATL1_19261"/>
<dbReference type="eggNOG" id="COG0804">
    <property type="taxonomic scope" value="Bacteria"/>
</dbReference>
<dbReference type="HOGENOM" id="CLU_000980_0_0_3"/>
<dbReference type="UniPathway" id="UPA00258">
    <property type="reaction ID" value="UER00370"/>
</dbReference>
<dbReference type="Proteomes" id="UP000002592">
    <property type="component" value="Chromosome"/>
</dbReference>
<dbReference type="GO" id="GO:0005737">
    <property type="term" value="C:cytoplasm"/>
    <property type="evidence" value="ECO:0007669"/>
    <property type="project" value="UniProtKB-SubCell"/>
</dbReference>
<dbReference type="GO" id="GO:0016151">
    <property type="term" value="F:nickel cation binding"/>
    <property type="evidence" value="ECO:0007669"/>
    <property type="project" value="UniProtKB-UniRule"/>
</dbReference>
<dbReference type="GO" id="GO:0009039">
    <property type="term" value="F:urease activity"/>
    <property type="evidence" value="ECO:0007669"/>
    <property type="project" value="UniProtKB-UniRule"/>
</dbReference>
<dbReference type="GO" id="GO:0043419">
    <property type="term" value="P:urea catabolic process"/>
    <property type="evidence" value="ECO:0007669"/>
    <property type="project" value="UniProtKB-UniRule"/>
</dbReference>
<dbReference type="CDD" id="cd00375">
    <property type="entry name" value="Urease_alpha"/>
    <property type="match status" value="1"/>
</dbReference>
<dbReference type="Gene3D" id="3.20.20.140">
    <property type="entry name" value="Metal-dependent hydrolases"/>
    <property type="match status" value="1"/>
</dbReference>
<dbReference type="Gene3D" id="2.30.40.10">
    <property type="entry name" value="Urease, subunit C, domain 1"/>
    <property type="match status" value="1"/>
</dbReference>
<dbReference type="HAMAP" id="MF_01953">
    <property type="entry name" value="Urease_alpha"/>
    <property type="match status" value="1"/>
</dbReference>
<dbReference type="InterPro" id="IPR006680">
    <property type="entry name" value="Amidohydro-rel"/>
</dbReference>
<dbReference type="InterPro" id="IPR011059">
    <property type="entry name" value="Metal-dep_hydrolase_composite"/>
</dbReference>
<dbReference type="InterPro" id="IPR032466">
    <property type="entry name" value="Metal_Hydrolase"/>
</dbReference>
<dbReference type="InterPro" id="IPR011612">
    <property type="entry name" value="Urease_alpha_N_dom"/>
</dbReference>
<dbReference type="InterPro" id="IPR050112">
    <property type="entry name" value="Urease_alpha_subunit"/>
</dbReference>
<dbReference type="InterPro" id="IPR017950">
    <property type="entry name" value="Urease_AS"/>
</dbReference>
<dbReference type="InterPro" id="IPR005848">
    <property type="entry name" value="Urease_asu"/>
</dbReference>
<dbReference type="InterPro" id="IPR017951">
    <property type="entry name" value="Urease_asu_c"/>
</dbReference>
<dbReference type="InterPro" id="IPR029754">
    <property type="entry name" value="Urease_Ni-bd"/>
</dbReference>
<dbReference type="NCBIfam" id="NF009685">
    <property type="entry name" value="PRK13206.1"/>
    <property type="match status" value="1"/>
</dbReference>
<dbReference type="NCBIfam" id="NF009686">
    <property type="entry name" value="PRK13207.1"/>
    <property type="match status" value="1"/>
</dbReference>
<dbReference type="NCBIfam" id="TIGR01792">
    <property type="entry name" value="urease_alph"/>
    <property type="match status" value="1"/>
</dbReference>
<dbReference type="PANTHER" id="PTHR43440">
    <property type="entry name" value="UREASE"/>
    <property type="match status" value="1"/>
</dbReference>
<dbReference type="PANTHER" id="PTHR43440:SF1">
    <property type="entry name" value="UREASE"/>
    <property type="match status" value="1"/>
</dbReference>
<dbReference type="Pfam" id="PF01979">
    <property type="entry name" value="Amidohydro_1"/>
    <property type="match status" value="1"/>
</dbReference>
<dbReference type="Pfam" id="PF00449">
    <property type="entry name" value="Urease_alpha"/>
    <property type="match status" value="1"/>
</dbReference>
<dbReference type="PRINTS" id="PR01752">
    <property type="entry name" value="UREASE"/>
</dbReference>
<dbReference type="SUPFAM" id="SSF51338">
    <property type="entry name" value="Composite domain of metallo-dependent hydrolases"/>
    <property type="match status" value="2"/>
</dbReference>
<dbReference type="SUPFAM" id="SSF51556">
    <property type="entry name" value="Metallo-dependent hydrolases"/>
    <property type="match status" value="1"/>
</dbReference>
<dbReference type="PROSITE" id="PS01120">
    <property type="entry name" value="UREASE_1"/>
    <property type="match status" value="1"/>
</dbReference>
<dbReference type="PROSITE" id="PS00145">
    <property type="entry name" value="UREASE_2"/>
    <property type="match status" value="1"/>
</dbReference>
<dbReference type="PROSITE" id="PS51368">
    <property type="entry name" value="UREASE_3"/>
    <property type="match status" value="1"/>
</dbReference>